<geneLocation type="plasmid">
    <name>pHM300</name>
</geneLocation>
<protein>
    <recommendedName>
        <fullName>Putative respiratory nitrate reductase heme subunit ORF7</fullName>
    </recommendedName>
</protein>
<gene>
    <name type="ordered locus">HFX_5102</name>
    <name type="ORF">C439_00700</name>
</gene>
<proteinExistence type="evidence at protein level"/>
<feature type="chain" id="PRO_0000428889" description="Putative respiratory nitrate reductase heme subunit ORF7">
    <location>
        <begin position="1"/>
        <end position="276"/>
    </location>
</feature>
<feature type="binding site" description="axial binding residue" evidence="1">
    <location>
        <position position="138"/>
    </location>
    <ligand>
        <name>heme b</name>
        <dbReference type="ChEBI" id="CHEBI:60344"/>
    </ligand>
    <ligandPart>
        <name>Fe</name>
        <dbReference type="ChEBI" id="CHEBI:18248"/>
    </ligandPart>
</feature>
<feature type="binding site" description="axial binding residue" evidence="1">
    <location>
        <position position="228"/>
    </location>
    <ligand>
        <name>heme b</name>
        <dbReference type="ChEBI" id="CHEBI:60344"/>
    </ligand>
    <ligandPart>
        <name>Fe</name>
        <dbReference type="ChEBI" id="CHEBI:18248"/>
    </ligandPart>
</feature>
<feature type="sequence conflict" description="In Ref. 1; CAF21909." evidence="3" ref="1">
    <original>STRN</original>
    <variation>EHPY</variation>
    <location>
        <begin position="140"/>
        <end position="143"/>
    </location>
</feature>
<feature type="sequence conflict" description="In Ref. 1; CAF21909." evidence="3" ref="1">
    <original>T</original>
    <variation>S</variation>
    <location>
        <position position="202"/>
    </location>
</feature>
<feature type="sequence conflict" description="In Ref. 1; CAF21909." evidence="3" ref="1">
    <original>AVQKNG</original>
    <variation>RYRRRR</variation>
    <location>
        <begin position="269"/>
        <end position="274"/>
    </location>
</feature>
<sequence length="276" mass="29561">MSKKSEKRATAVAAVVVCLVVLLTAVGPAMVTARPANEIPVESVLAEDQPQQPTSEAWNSVPAVEVPMASAPSGLPNASDTSIETLRVQSARTEERLYVRLSWADGTADRNISGPQQFVDAAAVQVPVNTTARPPISMGSTRNPVNVWYWRADGETEELLAGGPGTTTKFEQSAVETKTAYDDGRWTIVMSRELNSDAENRTSFAANDDVDVAFAVWNGSQMERSGRKSVSEWYHFPFGPGPQGPPYESILWTVAGLAIVGVALVTIQAVQKNGGD</sequence>
<keyword id="KW-1003">Cell membrane</keyword>
<keyword id="KW-0249">Electron transport</keyword>
<keyword id="KW-0349">Heme</keyword>
<keyword id="KW-0408">Iron</keyword>
<keyword id="KW-0472">Membrane</keyword>
<keyword id="KW-0479">Metal-binding</keyword>
<keyword id="KW-0534">Nitrate assimilation</keyword>
<keyword id="KW-0614">Plasmid</keyword>
<keyword id="KW-0813">Transport</keyword>
<accession>I3R9M7</accession>
<accession>Q703H3</accession>
<reference key="1">
    <citation type="journal article" date="2004" name="Biochim. Biophys. Acta">
        <title>Respiratory nitrate reductase from haloarchaeon Haloferax mediterranei: biochemical and genetic analysis.</title>
        <authorList>
            <person name="Lledo B."/>
            <person name="Martinez-Espinosa R.M."/>
            <person name="Marhuenda-Egea F.C."/>
            <person name="Bonete M.J."/>
        </authorList>
    </citation>
    <scope>NUCLEOTIDE SEQUENCE [GENOMIC DNA]</scope>
    <source>
        <strain>ATCC 33500 / DSM 1411 / JCM 8866 / NBRC 14739 / NCIMB 2177 / R-4</strain>
    </source>
</reference>
<reference key="2">
    <citation type="journal article" date="2012" name="J. Bacteriol.">
        <title>Complete genome sequence of the metabolically versatile halophilic archaeon Haloferax mediterranei, a poly(3-hydroxybutyrate-co-3-hydroxyvalerate) producer.</title>
        <authorList>
            <person name="Han J."/>
            <person name="Zhang F."/>
            <person name="Hou J."/>
            <person name="Liu X."/>
            <person name="Li M."/>
            <person name="Liu H."/>
            <person name="Cai L."/>
            <person name="Zhang B."/>
            <person name="Chen Y."/>
            <person name="Zhou J."/>
            <person name="Hu S."/>
            <person name="Xiang H."/>
        </authorList>
    </citation>
    <scope>NUCLEOTIDE SEQUENCE [LARGE SCALE GENOMIC DNA]</scope>
    <source>
        <strain>ATCC 33500 / DSM 1411 / JCM 8866 / NBRC 14739 / NCIMB 2177 / R-4</strain>
    </source>
</reference>
<reference key="3">
    <citation type="journal article" date="2014" name="PLoS Genet.">
        <title>Phylogenetically driven sequencing of extremely halophilic archaea reveals strategies for static and dynamic osmo-response.</title>
        <authorList>
            <person name="Becker E.A."/>
            <person name="Seitzer P.M."/>
            <person name="Tritt A."/>
            <person name="Larsen D."/>
            <person name="Krusor M."/>
            <person name="Yao A.I."/>
            <person name="Wu D."/>
            <person name="Madern D."/>
            <person name="Eisen J.A."/>
            <person name="Darling A.E."/>
            <person name="Facciotti M.T."/>
        </authorList>
    </citation>
    <scope>NUCLEOTIDE SEQUENCE [LARGE SCALE GENOMIC DNA]</scope>
    <source>
        <strain>ATCC 33500 / DSM 1411 / JCM 8866 / NBRC 14739 / NCIMB 2177 / R-4</strain>
    </source>
</reference>
<reference key="4">
    <citation type="journal article" date="2007" name="FEMS Microbiol. Lett.">
        <title>Look on the positive side! The orientation, identification and bioenergetics of 'Archaeal' membrane-bound nitrate reductases.</title>
        <authorList>
            <person name="Martinez-Espinosa R.M."/>
            <person name="Dridge E.J."/>
            <person name="Bonete M.J."/>
            <person name="Butt J.N."/>
            <person name="Butler C.S."/>
            <person name="Sargent F."/>
            <person name="Richardson D.J."/>
        </authorList>
    </citation>
    <scope>SUBUNIT</scope>
    <scope>PUTATIVE REACTION MECHANISM</scope>
</reference>
<comment type="function">
    <text>The respiratory membrane-bound nitrate reductase enzyme complex plays a role in generation of metabolic energy by using nitrate as a terminal electron acceptor during anaerobic conditions. May transfer electrons to the iron-sulfur centers of the catalytic beta subunit.</text>
</comment>
<comment type="cofactor">
    <cofactor evidence="1">
        <name>heme b</name>
        <dbReference type="ChEBI" id="CHEBI:60344"/>
    </cofactor>
    <text evidence="1">Binds 1 heme b (iron(II)-protoporphyrin IX) group per subunit.</text>
</comment>
<comment type="subunit">
    <text evidence="2">Probable multiprotein complex; a catalytic heterodimer of an alpha and beta chain is proposed to associate with additional subunits involved in membrane attachment and electron transfer.</text>
</comment>
<comment type="subcellular location">
    <subcellularLocation>
        <location evidence="3">Cell membrane</location>
        <topology>Peripheral membrane protein</topology>
    </subcellularLocation>
</comment>
<organism>
    <name type="scientific">Haloferax mediterranei (strain ATCC 33500 / DSM 1411 / JCM 8866 / NBRC 14739 / NCIMB 2177 / R-4)</name>
    <name type="common">Halobacterium mediterranei</name>
    <dbReference type="NCBI Taxonomy" id="523841"/>
    <lineage>
        <taxon>Archaea</taxon>
        <taxon>Methanobacteriati</taxon>
        <taxon>Methanobacteriota</taxon>
        <taxon>Stenosarchaea group</taxon>
        <taxon>Halobacteria</taxon>
        <taxon>Halobacteriales</taxon>
        <taxon>Haloferacaceae</taxon>
        <taxon>Haloferax</taxon>
    </lineage>
</organism>
<name>NAR7_HALMT</name>
<evidence type="ECO:0000250" key="1"/>
<evidence type="ECO:0000269" key="2">
    <source>
    </source>
</evidence>
<evidence type="ECO:0000305" key="3"/>
<dbReference type="EMBL" id="AJ621883">
    <property type="protein sequence ID" value="CAF21909.1"/>
    <property type="molecule type" value="Genomic_DNA"/>
</dbReference>
<dbReference type="EMBL" id="CP001870">
    <property type="protein sequence ID" value="AFK20937.1"/>
    <property type="molecule type" value="Genomic_DNA"/>
</dbReference>
<dbReference type="EMBL" id="AOLO01000001">
    <property type="protein sequence ID" value="EMA05273.1"/>
    <property type="molecule type" value="Genomic_DNA"/>
</dbReference>
<dbReference type="RefSeq" id="WP_004056337.1">
    <property type="nucleotide sequence ID" value="NC_017943.1"/>
</dbReference>
<dbReference type="SMR" id="I3R9M7"/>
<dbReference type="GeneID" id="40158238"/>
<dbReference type="KEGG" id="hme:HFX_5102"/>
<dbReference type="HOGENOM" id="CLU_982137_0_0_2"/>
<dbReference type="OrthoDB" id="145826at2157"/>
<dbReference type="Proteomes" id="UP000006469">
    <property type="component" value="Plasmid pHM300"/>
</dbReference>
<dbReference type="Proteomes" id="UP000011603">
    <property type="component" value="Unassembled WGS sequence"/>
</dbReference>
<dbReference type="GO" id="GO:0042597">
    <property type="term" value="C:periplasmic space"/>
    <property type="evidence" value="ECO:0007669"/>
    <property type="project" value="InterPro"/>
</dbReference>
<dbReference type="GO" id="GO:0005886">
    <property type="term" value="C:plasma membrane"/>
    <property type="evidence" value="ECO:0007669"/>
    <property type="project" value="UniProtKB-SubCell"/>
</dbReference>
<dbReference type="GO" id="GO:0020037">
    <property type="term" value="F:heme binding"/>
    <property type="evidence" value="ECO:0007669"/>
    <property type="project" value="InterPro"/>
</dbReference>
<dbReference type="GO" id="GO:0046872">
    <property type="term" value="F:metal ion binding"/>
    <property type="evidence" value="ECO:0007669"/>
    <property type="project" value="UniProtKB-KW"/>
</dbReference>
<dbReference type="GO" id="GO:0042128">
    <property type="term" value="P:nitrate assimilation"/>
    <property type="evidence" value="ECO:0007669"/>
    <property type="project" value="UniProtKB-KW"/>
</dbReference>
<dbReference type="CDD" id="cd09623">
    <property type="entry name" value="DOMON_EBDH"/>
    <property type="match status" value="1"/>
</dbReference>
<dbReference type="Gene3D" id="2.60.40.1190">
    <property type="match status" value="1"/>
</dbReference>
<dbReference type="InterPro" id="IPR019020">
    <property type="entry name" value="Cyt-c552/DMSO_Rdtase_haem-bd"/>
</dbReference>
<dbReference type="InterPro" id="IPR017838">
    <property type="entry name" value="DMSO_Rdtase_II_haem_b-bd_su"/>
</dbReference>
<dbReference type="NCBIfam" id="TIGR03477">
    <property type="entry name" value="DMSO_red_II_gam"/>
    <property type="match status" value="1"/>
</dbReference>
<dbReference type="Pfam" id="PF09459">
    <property type="entry name" value="EB_dh"/>
    <property type="match status" value="2"/>
</dbReference>
<dbReference type="SMART" id="SM00887">
    <property type="entry name" value="EB_dh"/>
    <property type="match status" value="1"/>
</dbReference>